<name>MDH_YERPN</name>
<accession>Q1CEJ3</accession>
<accession>C4GXW8</accession>
<sequence length="312" mass="32625">MKVAVLGAAGGIGQALALLLKTQLPSGSDLSLYDIAPVTPGVAVDLSHIPTAVNIKGFSGEDATPALQGADIVLISAGVARKPGMDRSDLFNVNAGIVRNLVEQIARTCPNALIGIITNPVNTTVAIAAEVLKKAGVYDKNKLFGITTLDTIRSNTFVAELKGKQPQDIEVPVIGGHSGVTILPLLSQIPGVSFTEQEVADLTKRIQNAGTEVVEAKAGGGSATLSMGQAAARFGLSLVRALQGESNVVECSYVEGDGKYARFFAQPILLGKNGVAERKDIGKLSAFEQQALENMLDVLHKDIELGEKFVNQ</sequence>
<keyword id="KW-0520">NAD</keyword>
<keyword id="KW-0560">Oxidoreductase</keyword>
<keyword id="KW-0816">Tricarboxylic acid cycle</keyword>
<proteinExistence type="inferred from homology"/>
<reference key="1">
    <citation type="journal article" date="2006" name="J. Bacteriol.">
        <title>Complete genome sequence of Yersinia pestis strains Antiqua and Nepal516: evidence of gene reduction in an emerging pathogen.</title>
        <authorList>
            <person name="Chain P.S.G."/>
            <person name="Hu P."/>
            <person name="Malfatti S.A."/>
            <person name="Radnedge L."/>
            <person name="Larimer F."/>
            <person name="Vergez L.M."/>
            <person name="Worsham P."/>
            <person name="Chu M.C."/>
            <person name="Andersen G.L."/>
        </authorList>
    </citation>
    <scope>NUCLEOTIDE SEQUENCE [LARGE SCALE GENOMIC DNA]</scope>
    <source>
        <strain>Nepal516</strain>
    </source>
</reference>
<reference key="2">
    <citation type="submission" date="2009-04" db="EMBL/GenBank/DDBJ databases">
        <title>Yersinia pestis Nepal516A whole genome shotgun sequencing project.</title>
        <authorList>
            <person name="Plunkett G. III"/>
            <person name="Anderson B.D."/>
            <person name="Baumler D.J."/>
            <person name="Burland V."/>
            <person name="Cabot E.L."/>
            <person name="Glasner J.D."/>
            <person name="Mau B."/>
            <person name="Neeno-Eckwall E."/>
            <person name="Perna N.T."/>
            <person name="Munk A.C."/>
            <person name="Tapia R."/>
            <person name="Green L.D."/>
            <person name="Rogers Y.C."/>
            <person name="Detter J.C."/>
            <person name="Bruce D.C."/>
            <person name="Brettin T.S."/>
        </authorList>
    </citation>
    <scope>NUCLEOTIDE SEQUENCE [LARGE SCALE GENOMIC DNA]</scope>
    <source>
        <strain>Nepal516</strain>
    </source>
</reference>
<gene>
    <name evidence="1" type="primary">mdh</name>
    <name type="ordered locus">YPN_3260</name>
    <name type="ORF">YP516_3703</name>
</gene>
<dbReference type="EC" id="1.1.1.37" evidence="1"/>
<dbReference type="EMBL" id="CP000305">
    <property type="protein sequence ID" value="ABG19587.1"/>
    <property type="molecule type" value="Genomic_DNA"/>
</dbReference>
<dbReference type="EMBL" id="ACNQ01000017">
    <property type="protein sequence ID" value="EEO75768.1"/>
    <property type="molecule type" value="Genomic_DNA"/>
</dbReference>
<dbReference type="RefSeq" id="WP_002210174.1">
    <property type="nucleotide sequence ID" value="NZ_ACNQ01000017.1"/>
</dbReference>
<dbReference type="SMR" id="Q1CEJ3"/>
<dbReference type="GeneID" id="57975198"/>
<dbReference type="KEGG" id="ypn:YPN_3260"/>
<dbReference type="HOGENOM" id="CLU_047181_1_0_6"/>
<dbReference type="Proteomes" id="UP000008936">
    <property type="component" value="Chromosome"/>
</dbReference>
<dbReference type="GO" id="GO:0005737">
    <property type="term" value="C:cytoplasm"/>
    <property type="evidence" value="ECO:0007669"/>
    <property type="project" value="TreeGrafter"/>
</dbReference>
<dbReference type="GO" id="GO:0030060">
    <property type="term" value="F:L-malate dehydrogenase (NAD+) activity"/>
    <property type="evidence" value="ECO:0007669"/>
    <property type="project" value="UniProtKB-UniRule"/>
</dbReference>
<dbReference type="GO" id="GO:0006108">
    <property type="term" value="P:malate metabolic process"/>
    <property type="evidence" value="ECO:0007669"/>
    <property type="project" value="InterPro"/>
</dbReference>
<dbReference type="GO" id="GO:0006099">
    <property type="term" value="P:tricarboxylic acid cycle"/>
    <property type="evidence" value="ECO:0007669"/>
    <property type="project" value="UniProtKB-UniRule"/>
</dbReference>
<dbReference type="CDD" id="cd01337">
    <property type="entry name" value="MDH_glyoxysomal_mitochondrial"/>
    <property type="match status" value="1"/>
</dbReference>
<dbReference type="FunFam" id="3.40.50.720:FF:000017">
    <property type="entry name" value="Malate dehydrogenase"/>
    <property type="match status" value="1"/>
</dbReference>
<dbReference type="FunFam" id="3.90.110.10:FF:000001">
    <property type="entry name" value="Malate dehydrogenase"/>
    <property type="match status" value="1"/>
</dbReference>
<dbReference type="Gene3D" id="3.90.110.10">
    <property type="entry name" value="Lactate dehydrogenase/glycoside hydrolase, family 4, C-terminal"/>
    <property type="match status" value="1"/>
</dbReference>
<dbReference type="Gene3D" id="3.40.50.720">
    <property type="entry name" value="NAD(P)-binding Rossmann-like Domain"/>
    <property type="match status" value="1"/>
</dbReference>
<dbReference type="HAMAP" id="MF_01516">
    <property type="entry name" value="Malate_dehydrog_1"/>
    <property type="match status" value="1"/>
</dbReference>
<dbReference type="InterPro" id="IPR001557">
    <property type="entry name" value="L-lactate/malate_DH"/>
</dbReference>
<dbReference type="InterPro" id="IPR022383">
    <property type="entry name" value="Lactate/malate_DH_C"/>
</dbReference>
<dbReference type="InterPro" id="IPR001236">
    <property type="entry name" value="Lactate/malate_DH_N"/>
</dbReference>
<dbReference type="InterPro" id="IPR015955">
    <property type="entry name" value="Lactate_DH/Glyco_Ohase_4_C"/>
</dbReference>
<dbReference type="InterPro" id="IPR001252">
    <property type="entry name" value="Malate_DH_AS"/>
</dbReference>
<dbReference type="InterPro" id="IPR010097">
    <property type="entry name" value="Malate_DH_type1"/>
</dbReference>
<dbReference type="InterPro" id="IPR023958">
    <property type="entry name" value="Malate_DH_type1_bac"/>
</dbReference>
<dbReference type="InterPro" id="IPR036291">
    <property type="entry name" value="NAD(P)-bd_dom_sf"/>
</dbReference>
<dbReference type="NCBIfam" id="TIGR01772">
    <property type="entry name" value="MDH_euk_gproteo"/>
    <property type="match status" value="1"/>
</dbReference>
<dbReference type="PANTHER" id="PTHR11540">
    <property type="entry name" value="MALATE AND LACTATE DEHYDROGENASE"/>
    <property type="match status" value="1"/>
</dbReference>
<dbReference type="PANTHER" id="PTHR11540:SF16">
    <property type="entry name" value="MALATE DEHYDROGENASE, MITOCHONDRIAL"/>
    <property type="match status" value="1"/>
</dbReference>
<dbReference type="Pfam" id="PF02866">
    <property type="entry name" value="Ldh_1_C"/>
    <property type="match status" value="1"/>
</dbReference>
<dbReference type="Pfam" id="PF00056">
    <property type="entry name" value="Ldh_1_N"/>
    <property type="match status" value="1"/>
</dbReference>
<dbReference type="PIRSF" id="PIRSF000102">
    <property type="entry name" value="Lac_mal_DH"/>
    <property type="match status" value="1"/>
</dbReference>
<dbReference type="SUPFAM" id="SSF56327">
    <property type="entry name" value="LDH C-terminal domain-like"/>
    <property type="match status" value="1"/>
</dbReference>
<dbReference type="SUPFAM" id="SSF51735">
    <property type="entry name" value="NAD(P)-binding Rossmann-fold domains"/>
    <property type="match status" value="1"/>
</dbReference>
<dbReference type="PROSITE" id="PS00068">
    <property type="entry name" value="MDH"/>
    <property type="match status" value="1"/>
</dbReference>
<comment type="function">
    <text evidence="1">Catalyzes the reversible oxidation of malate to oxaloacetate.</text>
</comment>
<comment type="catalytic activity">
    <reaction evidence="1">
        <text>(S)-malate + NAD(+) = oxaloacetate + NADH + H(+)</text>
        <dbReference type="Rhea" id="RHEA:21432"/>
        <dbReference type="ChEBI" id="CHEBI:15378"/>
        <dbReference type="ChEBI" id="CHEBI:15589"/>
        <dbReference type="ChEBI" id="CHEBI:16452"/>
        <dbReference type="ChEBI" id="CHEBI:57540"/>
        <dbReference type="ChEBI" id="CHEBI:57945"/>
        <dbReference type="EC" id="1.1.1.37"/>
    </reaction>
</comment>
<comment type="subunit">
    <text evidence="1">Homodimer.</text>
</comment>
<comment type="similarity">
    <text evidence="1">Belongs to the LDH/MDH superfamily. MDH type 1 family.</text>
</comment>
<organism>
    <name type="scientific">Yersinia pestis bv. Antiqua (strain Nepal516)</name>
    <dbReference type="NCBI Taxonomy" id="377628"/>
    <lineage>
        <taxon>Bacteria</taxon>
        <taxon>Pseudomonadati</taxon>
        <taxon>Pseudomonadota</taxon>
        <taxon>Gammaproteobacteria</taxon>
        <taxon>Enterobacterales</taxon>
        <taxon>Yersiniaceae</taxon>
        <taxon>Yersinia</taxon>
    </lineage>
</organism>
<evidence type="ECO:0000255" key="1">
    <source>
        <dbReference type="HAMAP-Rule" id="MF_01516"/>
    </source>
</evidence>
<feature type="chain" id="PRO_0000294314" description="Malate dehydrogenase">
    <location>
        <begin position="1"/>
        <end position="312"/>
    </location>
</feature>
<feature type="active site" description="Proton acceptor" evidence="1">
    <location>
        <position position="177"/>
    </location>
</feature>
<feature type="binding site" evidence="1">
    <location>
        <begin position="7"/>
        <end position="13"/>
    </location>
    <ligand>
        <name>NAD(+)</name>
        <dbReference type="ChEBI" id="CHEBI:57540"/>
    </ligand>
</feature>
<feature type="binding site" evidence="1">
    <location>
        <position position="34"/>
    </location>
    <ligand>
        <name>NAD(+)</name>
        <dbReference type="ChEBI" id="CHEBI:57540"/>
    </ligand>
</feature>
<feature type="binding site" evidence="1">
    <location>
        <position position="81"/>
    </location>
    <ligand>
        <name>substrate</name>
    </ligand>
</feature>
<feature type="binding site" evidence="1">
    <location>
        <position position="87"/>
    </location>
    <ligand>
        <name>substrate</name>
    </ligand>
</feature>
<feature type="binding site" evidence="1">
    <location>
        <position position="94"/>
    </location>
    <ligand>
        <name>NAD(+)</name>
        <dbReference type="ChEBI" id="CHEBI:57540"/>
    </ligand>
</feature>
<feature type="binding site" evidence="1">
    <location>
        <begin position="117"/>
        <end position="119"/>
    </location>
    <ligand>
        <name>NAD(+)</name>
        <dbReference type="ChEBI" id="CHEBI:57540"/>
    </ligand>
</feature>
<feature type="binding site" evidence="1">
    <location>
        <position position="119"/>
    </location>
    <ligand>
        <name>substrate</name>
    </ligand>
</feature>
<feature type="binding site" evidence="1">
    <location>
        <position position="153"/>
    </location>
    <ligand>
        <name>substrate</name>
    </ligand>
</feature>
<feature type="binding site" evidence="1">
    <location>
        <position position="227"/>
    </location>
    <ligand>
        <name>NAD(+)</name>
        <dbReference type="ChEBI" id="CHEBI:57540"/>
    </ligand>
</feature>
<protein>
    <recommendedName>
        <fullName evidence="1">Malate dehydrogenase</fullName>
        <ecNumber evidence="1">1.1.1.37</ecNumber>
    </recommendedName>
</protein>